<accession>P0C278</accession>
<accession>Q02469</accession>
<accession>Q9X969</accession>
<feature type="chain" id="PRO_0000010344" description="Fumarate reductase (cytochrome)">
    <location>
        <begin position="1"/>
        <end position="571"/>
    </location>
</feature>
<feature type="region of interest" description="Flavoprotein-like">
    <location>
        <begin position="118"/>
        <end position="571"/>
    </location>
</feature>
<feature type="active site" description="Proton donor" evidence="9">
    <location>
        <position position="402"/>
    </location>
</feature>
<feature type="binding site" description="axial binding residue" evidence="3 10">
    <location>
        <position position="8"/>
    </location>
    <ligand>
        <name>heme c</name>
        <dbReference type="ChEBI" id="CHEBI:61717"/>
        <label>2</label>
    </ligand>
    <ligandPart>
        <name>Fe</name>
        <dbReference type="ChEBI" id="CHEBI:18248"/>
    </ligandPart>
</feature>
<feature type="binding site" description="covalent" evidence="3 10">
    <location>
        <position position="14"/>
    </location>
    <ligand>
        <name>heme c</name>
        <dbReference type="ChEBI" id="CHEBI:61717"/>
        <label>1</label>
    </ligand>
</feature>
<feature type="binding site" description="covalent" evidence="3 10">
    <location>
        <position position="17"/>
    </location>
    <ligand>
        <name>heme c</name>
        <dbReference type="ChEBI" id="CHEBI:61717"/>
        <label>1</label>
    </ligand>
</feature>
<feature type="binding site" description="axial binding residue" evidence="3 10">
    <location>
        <position position="18"/>
    </location>
    <ligand>
        <name>heme c</name>
        <dbReference type="ChEBI" id="CHEBI:61717"/>
        <label>1</label>
    </ligand>
    <ligandPart>
        <name>Fe</name>
        <dbReference type="ChEBI" id="CHEBI:18248"/>
    </ligandPart>
</feature>
<feature type="binding site" description="covalent" evidence="3 10">
    <location>
        <position position="36"/>
    </location>
    <ligand>
        <name>heme c</name>
        <dbReference type="ChEBI" id="CHEBI:61717"/>
        <label>2</label>
    </ligand>
</feature>
<feature type="binding site" description="covalent" evidence="10">
    <location>
        <position position="39"/>
    </location>
    <ligand>
        <name>heme c</name>
        <dbReference type="ChEBI" id="CHEBI:61717"/>
        <label>2</label>
    </ligand>
</feature>
<feature type="binding site" description="axial binding residue" evidence="3 10">
    <location>
        <position position="40"/>
    </location>
    <ligand>
        <name>heme c</name>
        <dbReference type="ChEBI" id="CHEBI:61717"/>
        <label>2</label>
    </ligand>
    <ligandPart>
        <name>Fe</name>
        <dbReference type="ChEBI" id="CHEBI:18248"/>
    </ligandPart>
</feature>
<feature type="binding site" evidence="3 10">
    <location>
        <position position="52"/>
    </location>
    <ligand>
        <name>heme c</name>
        <dbReference type="ChEBI" id="CHEBI:61717"/>
        <label>3</label>
    </ligand>
</feature>
<feature type="binding site" description="axial binding residue" evidence="3 10">
    <location>
        <position position="58"/>
    </location>
    <ligand>
        <name>heme c</name>
        <dbReference type="ChEBI" id="CHEBI:61717"/>
        <label>3</label>
    </ligand>
    <ligandPart>
        <name>Fe</name>
        <dbReference type="ChEBI" id="CHEBI:18248"/>
    </ligandPart>
</feature>
<feature type="binding site" description="axial binding residue" evidence="3 10">
    <location>
        <position position="61"/>
    </location>
    <ligand>
        <name>heme c</name>
        <dbReference type="ChEBI" id="CHEBI:61717"/>
        <label>4</label>
    </ligand>
    <ligandPart>
        <name>Fe</name>
        <dbReference type="ChEBI" id="CHEBI:18248"/>
    </ligandPart>
</feature>
<feature type="binding site" description="covalent" evidence="3 10">
    <location>
        <position position="68"/>
    </location>
    <ligand>
        <name>heme c</name>
        <dbReference type="ChEBI" id="CHEBI:61717"/>
        <label>3</label>
    </ligand>
</feature>
<feature type="binding site" description="covalent" evidence="3 10">
    <location>
        <position position="71"/>
    </location>
    <ligand>
        <name>heme c</name>
        <dbReference type="ChEBI" id="CHEBI:61717"/>
        <label>3</label>
    </ligand>
</feature>
<feature type="binding site" description="axial binding residue" evidence="3 10">
    <location>
        <position position="72"/>
    </location>
    <ligand>
        <name>heme c</name>
        <dbReference type="ChEBI" id="CHEBI:61717"/>
        <label>3</label>
    </ligand>
    <ligandPart>
        <name>Fe</name>
        <dbReference type="ChEBI" id="CHEBI:18248"/>
    </ligandPart>
</feature>
<feature type="binding site" evidence="3 10">
    <location>
        <position position="74"/>
    </location>
    <ligand>
        <name>heme c</name>
        <dbReference type="ChEBI" id="CHEBI:61717"/>
        <label>1</label>
    </ligand>
</feature>
<feature type="binding site" description="axial binding residue" evidence="3 10">
    <location>
        <position position="75"/>
    </location>
    <ligand>
        <name>heme c</name>
        <dbReference type="ChEBI" id="CHEBI:61717"/>
        <label>1</label>
    </ligand>
    <ligandPart>
        <name>Fe</name>
        <dbReference type="ChEBI" id="CHEBI:18248"/>
    </ligandPart>
</feature>
<feature type="binding site" description="covalent" evidence="3 10">
    <location>
        <position position="82"/>
    </location>
    <ligand>
        <name>heme c</name>
        <dbReference type="ChEBI" id="CHEBI:61717"/>
        <label>4</label>
    </ligand>
</feature>
<feature type="binding site" description="covalent" evidence="3 10">
    <location>
        <position position="85"/>
    </location>
    <ligand>
        <name>heme c</name>
        <dbReference type="ChEBI" id="CHEBI:61717"/>
        <label>4</label>
    </ligand>
</feature>
<feature type="binding site" description="axial binding residue" evidence="3 10">
    <location>
        <position position="86"/>
    </location>
    <ligand>
        <name>heme c</name>
        <dbReference type="ChEBI" id="CHEBI:61717"/>
        <label>4</label>
    </ligand>
    <ligandPart>
        <name>Fe</name>
        <dbReference type="ChEBI" id="CHEBI:18248"/>
    </ligandPart>
</feature>
<feature type="binding site" evidence="3 10">
    <location>
        <position position="91"/>
    </location>
    <ligand>
        <name>heme c</name>
        <dbReference type="ChEBI" id="CHEBI:61717"/>
        <label>3</label>
    </ligand>
</feature>
<feature type="binding site" evidence="3 10">
    <location>
        <position position="94"/>
    </location>
    <ligand>
        <name>heme c</name>
        <dbReference type="ChEBI" id="CHEBI:61717"/>
        <label>2</label>
    </ligand>
</feature>
<feature type="binding site" evidence="3 10">
    <location>
        <position position="137"/>
    </location>
    <ligand>
        <name>FAD</name>
        <dbReference type="ChEBI" id="CHEBI:57692"/>
    </ligand>
</feature>
<feature type="binding site" evidence="3 10">
    <location>
        <position position="156"/>
    </location>
    <ligand>
        <name>FAD</name>
        <dbReference type="ChEBI" id="CHEBI:57692"/>
    </ligand>
</feature>
<feature type="binding site" evidence="3 10">
    <location>
        <position position="164"/>
    </location>
    <ligand>
        <name>FAD</name>
        <dbReference type="ChEBI" id="CHEBI:57692"/>
    </ligand>
</feature>
<feature type="binding site" evidence="3 10">
    <location>
        <position position="165"/>
    </location>
    <ligand>
        <name>FAD</name>
        <dbReference type="ChEBI" id="CHEBI:57692"/>
    </ligand>
</feature>
<feature type="binding site" evidence="3 10">
    <location>
        <position position="169"/>
    </location>
    <ligand>
        <name>FAD</name>
        <dbReference type="ChEBI" id="CHEBI:57692"/>
    </ligand>
</feature>
<feature type="binding site" evidence="3 10">
    <location>
        <position position="170"/>
    </location>
    <ligand>
        <name>FAD</name>
        <dbReference type="ChEBI" id="CHEBI:57692"/>
    </ligand>
</feature>
<feature type="binding site" evidence="1">
    <location>
        <position position="170"/>
    </location>
    <ligand>
        <name>succinate</name>
        <dbReference type="ChEBI" id="CHEBI:30031"/>
    </ligand>
</feature>
<feature type="binding site" evidence="3 10">
    <location>
        <position position="171"/>
    </location>
    <ligand>
        <name>FAD</name>
        <dbReference type="ChEBI" id="CHEBI:57692"/>
    </ligand>
</feature>
<feature type="binding site" evidence="3 10">
    <location>
        <position position="278"/>
    </location>
    <ligand>
        <name>FAD</name>
        <dbReference type="ChEBI" id="CHEBI:57692"/>
    </ligand>
</feature>
<feature type="binding site" evidence="3 10">
    <location>
        <position position="338"/>
    </location>
    <ligand>
        <name>FAD</name>
        <dbReference type="ChEBI" id="CHEBI:57692"/>
    </ligand>
</feature>
<feature type="binding site" evidence="1">
    <location>
        <position position="365"/>
    </location>
    <ligand>
        <name>succinate</name>
        <dbReference type="ChEBI" id="CHEBI:30031"/>
    </ligand>
</feature>
<feature type="binding site" evidence="3 10">
    <location>
        <position position="377"/>
    </location>
    <ligand>
        <name>fumarate</name>
        <dbReference type="ChEBI" id="CHEBI:29806"/>
    </ligand>
</feature>
<feature type="binding site" evidence="1">
    <location>
        <position position="377"/>
    </location>
    <ligand>
        <name>succinate</name>
        <dbReference type="ChEBI" id="CHEBI:30031"/>
    </ligand>
</feature>
<feature type="binding site" evidence="3 10">
    <location>
        <position position="378"/>
    </location>
    <ligand>
        <name>fumarate</name>
        <dbReference type="ChEBI" id="CHEBI:29806"/>
    </ligand>
</feature>
<feature type="binding site" evidence="1">
    <location>
        <position position="378"/>
    </location>
    <ligand>
        <name>succinate</name>
        <dbReference type="ChEBI" id="CHEBI:30031"/>
    </ligand>
</feature>
<feature type="binding site" evidence="3 10">
    <location>
        <position position="402"/>
    </location>
    <ligand>
        <name>fumarate</name>
        <dbReference type="ChEBI" id="CHEBI:29806"/>
    </ligand>
</feature>
<feature type="binding site" evidence="3 10">
    <location>
        <position position="431"/>
    </location>
    <ligand>
        <name>heme c</name>
        <dbReference type="ChEBI" id="CHEBI:61717"/>
        <label>4</label>
    </ligand>
</feature>
<feature type="binding site" evidence="3 10">
    <location>
        <position position="504"/>
    </location>
    <ligand>
        <name>fumarate</name>
        <dbReference type="ChEBI" id="CHEBI:29806"/>
    </ligand>
</feature>
<feature type="binding site" evidence="1">
    <location>
        <position position="504"/>
    </location>
    <ligand>
        <name>succinate</name>
        <dbReference type="ChEBI" id="CHEBI:30031"/>
    </ligand>
</feature>
<feature type="binding site" evidence="3 10">
    <location>
        <position position="505"/>
    </location>
    <ligand>
        <name>FAD</name>
        <dbReference type="ChEBI" id="CHEBI:57692"/>
    </ligand>
</feature>
<feature type="binding site" evidence="3 10">
    <location>
        <position position="534"/>
    </location>
    <ligand>
        <name>FAD</name>
        <dbReference type="ChEBI" id="CHEBI:57692"/>
    </ligand>
</feature>
<feature type="binding site" evidence="3 10">
    <location>
        <position position="544"/>
    </location>
    <ligand>
        <name>fumarate</name>
        <dbReference type="ChEBI" id="CHEBI:29806"/>
    </ligand>
</feature>
<feature type="binding site" evidence="1">
    <location>
        <position position="544"/>
    </location>
    <ligand>
        <name>succinate</name>
        <dbReference type="ChEBI" id="CHEBI:30031"/>
    </ligand>
</feature>
<feature type="binding site" evidence="3 10">
    <location>
        <position position="547"/>
    </location>
    <ligand>
        <name>fumarate</name>
        <dbReference type="ChEBI" id="CHEBI:29806"/>
    </ligand>
</feature>
<feature type="binding site" evidence="1">
    <location>
        <position position="547"/>
    </location>
    <ligand>
        <name>succinate</name>
        <dbReference type="ChEBI" id="CHEBI:30031"/>
    </ligand>
</feature>
<feature type="binding site" evidence="3 10">
    <location>
        <position position="549"/>
    </location>
    <ligand>
        <name>FAD</name>
        <dbReference type="ChEBI" id="CHEBI:57692"/>
    </ligand>
</feature>
<feature type="binding site" evidence="3 10">
    <location>
        <position position="550"/>
    </location>
    <ligand>
        <name>FAD</name>
        <dbReference type="ChEBI" id="CHEBI:57692"/>
    </ligand>
</feature>
<feature type="mutagenesis site" description="Reduces catalytic activity 10-fold. Reduces affinity for fumarate." evidence="5">
    <original>H</original>
    <variation>A</variation>
    <location>
        <position position="61"/>
    </location>
</feature>
<feature type="mutagenesis site" description="Reduces catalytic activity 5-fold. Reduces affinity for fumarate." evidence="5">
    <original>H</original>
    <variation>M</variation>
    <location>
        <position position="61"/>
    </location>
</feature>
<feature type="mutagenesis site" description="Reduces catalytic activity by over 75%." evidence="3">
    <original>H</original>
    <variation>A</variation>
    <location>
        <position position="365"/>
    </location>
</feature>
<feature type="mutagenesis site" description="Strongly reduced affinity for substrate. Reduces activity 10000-fold." evidence="6">
    <original>E</original>
    <variation>D</variation>
    <location>
        <position position="378"/>
    </location>
</feature>
<feature type="mutagenesis site" description="Strongly reduced catalytic activity. No effect on substrate affinity." evidence="6">
    <original>R</original>
    <variation>M</variation>
    <location>
        <position position="381"/>
    </location>
</feature>
<feature type="mutagenesis site" description="Loss of activity." evidence="3 4">
    <original>R</original>
    <variation>A</variation>
    <location>
        <position position="402"/>
    </location>
</feature>
<feature type="mutagenesis site" description="Reduces activity 10000-fold." evidence="3 4">
    <original>R</original>
    <variation>K</variation>
    <variation>Y</variation>
    <location>
        <position position="402"/>
    </location>
</feature>
<feature type="mutagenesis site" description="Reduces catalytic activity by over 64%." evidence="3">
    <original>H</original>
    <variation>A</variation>
    <location>
        <position position="504"/>
    </location>
</feature>
<feature type="helix" evidence="13">
    <location>
        <begin position="4"/>
        <end position="9"/>
    </location>
</feature>
<feature type="helix" evidence="13">
    <location>
        <begin position="14"/>
        <end position="16"/>
    </location>
</feature>
<feature type="helix" evidence="13">
    <location>
        <begin position="30"/>
        <end position="40"/>
    </location>
</feature>
<feature type="helix" evidence="13">
    <location>
        <begin position="43"/>
        <end position="47"/>
    </location>
</feature>
<feature type="turn" evidence="12">
    <location>
        <begin position="57"/>
        <end position="59"/>
    </location>
</feature>
<feature type="helix" evidence="13">
    <location>
        <begin position="68"/>
        <end position="70"/>
    </location>
</feature>
<feature type="strand" evidence="13">
    <location>
        <begin position="74"/>
        <end position="76"/>
    </location>
</feature>
<feature type="helix" evidence="13">
    <location>
        <begin position="81"/>
        <end position="84"/>
    </location>
</feature>
<feature type="helix" evidence="13">
    <location>
        <begin position="107"/>
        <end position="111"/>
    </location>
</feature>
<feature type="helix" evidence="13">
    <location>
        <begin position="112"/>
        <end position="120"/>
    </location>
</feature>
<feature type="strand" evidence="13">
    <location>
        <begin position="124"/>
        <end position="126"/>
    </location>
</feature>
<feature type="strand" evidence="13">
    <location>
        <begin position="128"/>
        <end position="132"/>
    </location>
</feature>
<feature type="helix" evidence="13">
    <location>
        <begin position="136"/>
        <end position="147"/>
    </location>
</feature>
<feature type="strand" evidence="13">
    <location>
        <begin position="152"/>
        <end position="155"/>
    </location>
</feature>
<feature type="strand" evidence="13">
    <location>
        <begin position="157"/>
        <end position="161"/>
    </location>
</feature>
<feature type="helix" evidence="13">
    <location>
        <begin position="165"/>
        <end position="167"/>
    </location>
</feature>
<feature type="helix" evidence="13">
    <location>
        <begin position="178"/>
        <end position="182"/>
    </location>
</feature>
<feature type="helix" evidence="13">
    <location>
        <begin position="189"/>
        <end position="199"/>
    </location>
</feature>
<feature type="turn" evidence="13">
    <location>
        <begin position="200"/>
        <end position="202"/>
    </location>
</feature>
<feature type="helix" evidence="13">
    <location>
        <begin position="206"/>
        <end position="225"/>
    </location>
</feature>
<feature type="strand" evidence="13">
    <location>
        <begin position="232"/>
        <end position="234"/>
    </location>
</feature>
<feature type="strand" evidence="13">
    <location>
        <begin position="244"/>
        <end position="247"/>
    </location>
</feature>
<feature type="turn" evidence="13">
    <location>
        <begin position="248"/>
        <end position="250"/>
    </location>
</feature>
<feature type="helix" evidence="13">
    <location>
        <begin position="253"/>
        <end position="267"/>
    </location>
</feature>
<feature type="strand" evidence="13">
    <location>
        <begin position="271"/>
        <end position="283"/>
    </location>
</feature>
<feature type="strand" evidence="13">
    <location>
        <begin position="289"/>
        <end position="296"/>
    </location>
</feature>
<feature type="turn" evidence="13">
    <location>
        <begin position="297"/>
        <end position="299"/>
    </location>
</feature>
<feature type="strand" evidence="13">
    <location>
        <begin position="300"/>
        <end position="305"/>
    </location>
</feature>
<feature type="strand" evidence="13">
    <location>
        <begin position="307"/>
        <end position="311"/>
    </location>
</feature>
<feature type="helix" evidence="13">
    <location>
        <begin position="320"/>
        <end position="326"/>
    </location>
</feature>
<feature type="helix" evidence="13">
    <location>
        <begin position="328"/>
        <end position="330"/>
    </location>
</feature>
<feature type="strand" evidence="11">
    <location>
        <begin position="335"/>
        <end position="337"/>
    </location>
</feature>
<feature type="helix" evidence="13">
    <location>
        <begin position="344"/>
        <end position="351"/>
    </location>
</feature>
<feature type="strand" evidence="12">
    <location>
        <begin position="356"/>
        <end position="358"/>
    </location>
</feature>
<feature type="strand" evidence="13">
    <location>
        <begin position="362"/>
        <end position="369"/>
    </location>
</feature>
<feature type="turn" evidence="13">
    <location>
        <begin position="370"/>
        <end position="372"/>
    </location>
</feature>
<feature type="strand" evidence="12">
    <location>
        <begin position="373"/>
        <end position="375"/>
    </location>
</feature>
<feature type="helix" evidence="13">
    <location>
        <begin position="379"/>
        <end position="382"/>
    </location>
</feature>
<feature type="strand" evidence="13">
    <location>
        <begin position="386"/>
        <end position="388"/>
    </location>
</feature>
<feature type="helix" evidence="13">
    <location>
        <begin position="402"/>
        <end position="410"/>
    </location>
</feature>
<feature type="helix" evidence="13">
    <location>
        <begin position="413"/>
        <end position="415"/>
    </location>
</feature>
<feature type="strand" evidence="13">
    <location>
        <begin position="417"/>
        <end position="422"/>
    </location>
</feature>
<feature type="helix" evidence="13">
    <location>
        <begin position="423"/>
        <end position="428"/>
    </location>
</feature>
<feature type="helix" evidence="13">
    <location>
        <begin position="432"/>
        <end position="438"/>
    </location>
</feature>
<feature type="strand" evidence="13">
    <location>
        <begin position="443"/>
        <end position="446"/>
    </location>
</feature>
<feature type="helix" evidence="13">
    <location>
        <begin position="447"/>
        <end position="454"/>
    </location>
</feature>
<feature type="helix" evidence="13">
    <location>
        <begin position="458"/>
        <end position="474"/>
    </location>
</feature>
<feature type="turn" evidence="13">
    <location>
        <begin position="478"/>
        <end position="480"/>
    </location>
</feature>
<feature type="strand" evidence="13">
    <location>
        <begin position="494"/>
        <end position="506"/>
    </location>
</feature>
<feature type="strand" evidence="13">
    <location>
        <begin position="509"/>
        <end position="512"/>
    </location>
</feature>
<feature type="strand" evidence="13">
    <location>
        <begin position="517"/>
        <end position="519"/>
    </location>
</feature>
<feature type="strand" evidence="13">
    <location>
        <begin position="525"/>
        <end position="531"/>
    </location>
</feature>
<feature type="strand" evidence="13">
    <location>
        <begin position="536"/>
        <end position="540"/>
    </location>
</feature>
<feature type="helix" evidence="13">
    <location>
        <begin position="548"/>
        <end position="567"/>
    </location>
</feature>
<organism>
    <name type="scientific">Shewanella frigidimarina</name>
    <dbReference type="NCBI Taxonomy" id="56812"/>
    <lineage>
        <taxon>Bacteria</taxon>
        <taxon>Pseudomonadati</taxon>
        <taxon>Pseudomonadota</taxon>
        <taxon>Gammaproteobacteria</taxon>
        <taxon>Alteromonadales</taxon>
        <taxon>Shewanellaceae</taxon>
        <taxon>Shewanella</taxon>
    </lineage>
</organism>
<keyword id="KW-0002">3D-structure</keyword>
<keyword id="KW-0249">Electron transport</keyword>
<keyword id="KW-0274">FAD</keyword>
<keyword id="KW-0285">Flavoprotein</keyword>
<keyword id="KW-0349">Heme</keyword>
<keyword id="KW-0408">Iron</keyword>
<keyword id="KW-0479">Metal-binding</keyword>
<keyword id="KW-0560">Oxidoreductase</keyword>
<keyword id="KW-0574">Periplasm</keyword>
<keyword id="KW-0813">Transport</keyword>
<dbReference type="EC" id="1.3.2.4" evidence="9"/>
<dbReference type="EMBL" id="AJ132010">
    <property type="protein sequence ID" value="CAB38558.1"/>
    <property type="molecule type" value="Genomic_DNA"/>
</dbReference>
<dbReference type="PDB" id="1E39">
    <property type="method" value="X-ray"/>
    <property type="resolution" value="1.80 A"/>
    <property type="chains" value="A=1-571"/>
</dbReference>
<dbReference type="PDB" id="1JRX">
    <property type="method" value="X-ray"/>
    <property type="resolution" value="2.00 A"/>
    <property type="chains" value="A/B=1-571"/>
</dbReference>
<dbReference type="PDB" id="1JRY">
    <property type="method" value="X-ray"/>
    <property type="resolution" value="2.00 A"/>
    <property type="chains" value="A/B=1-571"/>
</dbReference>
<dbReference type="PDB" id="1JRZ">
    <property type="method" value="X-ray"/>
    <property type="resolution" value="2.00 A"/>
    <property type="chains" value="A/B=1-571"/>
</dbReference>
<dbReference type="PDB" id="1KSS">
    <property type="method" value="X-ray"/>
    <property type="resolution" value="1.80 A"/>
    <property type="chains" value="A=1-571"/>
</dbReference>
<dbReference type="PDB" id="1KSU">
    <property type="method" value="X-ray"/>
    <property type="resolution" value="2.00 A"/>
    <property type="chains" value="A/B=1-571"/>
</dbReference>
<dbReference type="PDB" id="1LJ1">
    <property type="method" value="X-ray"/>
    <property type="resolution" value="2.00 A"/>
    <property type="chains" value="A/B=1-571"/>
</dbReference>
<dbReference type="PDB" id="1M64">
    <property type="method" value="X-ray"/>
    <property type="resolution" value="1.80 A"/>
    <property type="chains" value="A/B=1-571"/>
</dbReference>
<dbReference type="PDB" id="1P2E">
    <property type="method" value="X-ray"/>
    <property type="resolution" value="2.20 A"/>
    <property type="chains" value="A=1-571"/>
</dbReference>
<dbReference type="PDB" id="1P2H">
    <property type="method" value="X-ray"/>
    <property type="resolution" value="2.10 A"/>
    <property type="chains" value="A=1-571"/>
</dbReference>
<dbReference type="PDB" id="1Q9I">
    <property type="method" value="X-ray"/>
    <property type="resolution" value="1.60 A"/>
    <property type="chains" value="A=1-571"/>
</dbReference>
<dbReference type="PDB" id="1QJD">
    <property type="method" value="X-ray"/>
    <property type="resolution" value="1.80 A"/>
    <property type="chains" value="A=1-571"/>
</dbReference>
<dbReference type="PDB" id="1Y0P">
    <property type="method" value="X-ray"/>
    <property type="resolution" value="1.50 A"/>
    <property type="chains" value="A=1-571"/>
</dbReference>
<dbReference type="PDB" id="2B7R">
    <property type="method" value="X-ray"/>
    <property type="resolution" value="1.70 A"/>
    <property type="chains" value="A=1-571"/>
</dbReference>
<dbReference type="PDB" id="2B7S">
    <property type="method" value="X-ray"/>
    <property type="resolution" value="2.12 A"/>
    <property type="chains" value="A=1-571"/>
</dbReference>
<dbReference type="PDBsum" id="1E39"/>
<dbReference type="PDBsum" id="1JRX"/>
<dbReference type="PDBsum" id="1JRY"/>
<dbReference type="PDBsum" id="1JRZ"/>
<dbReference type="PDBsum" id="1KSS"/>
<dbReference type="PDBsum" id="1KSU"/>
<dbReference type="PDBsum" id="1LJ1"/>
<dbReference type="PDBsum" id="1M64"/>
<dbReference type="PDBsum" id="1P2E"/>
<dbReference type="PDBsum" id="1P2H"/>
<dbReference type="PDBsum" id="1Q9I"/>
<dbReference type="PDBsum" id="1QJD"/>
<dbReference type="PDBsum" id="1Y0P"/>
<dbReference type="PDBsum" id="2B7R"/>
<dbReference type="PDBsum" id="2B7S"/>
<dbReference type="SMR" id="P0C278"/>
<dbReference type="DrugBank" id="DB04734">
    <property type="generic name" value="Citraconic acid"/>
</dbReference>
<dbReference type="DrugBank" id="DB03147">
    <property type="generic name" value="Flavin adenine dinucleotide"/>
</dbReference>
<dbReference type="DrugBank" id="DB01677">
    <property type="generic name" value="Fumaric acid"/>
</dbReference>
<dbReference type="DrugBank" id="DB03343">
    <property type="generic name" value="Malate Like Intermediate"/>
</dbReference>
<dbReference type="SABIO-RK" id="P0C278"/>
<dbReference type="EvolutionaryTrace" id="P0C278"/>
<dbReference type="GO" id="GO:0030288">
    <property type="term" value="C:outer membrane-bounded periplasmic space"/>
    <property type="evidence" value="ECO:0000303"/>
    <property type="project" value="UniProtKB"/>
</dbReference>
<dbReference type="GO" id="GO:0009055">
    <property type="term" value="F:electron transfer activity"/>
    <property type="evidence" value="ECO:0000303"/>
    <property type="project" value="UniProtKB"/>
</dbReference>
<dbReference type="GO" id="GO:0010181">
    <property type="term" value="F:FMN binding"/>
    <property type="evidence" value="ECO:0007669"/>
    <property type="project" value="InterPro"/>
</dbReference>
<dbReference type="GO" id="GO:0046872">
    <property type="term" value="F:metal ion binding"/>
    <property type="evidence" value="ECO:0007669"/>
    <property type="project" value="UniProtKB-KW"/>
</dbReference>
<dbReference type="GO" id="GO:0016491">
    <property type="term" value="F:oxidoreductase activity"/>
    <property type="evidence" value="ECO:0007669"/>
    <property type="project" value="UniProtKB-KW"/>
</dbReference>
<dbReference type="GO" id="GO:0019645">
    <property type="term" value="P:anaerobic electron transport chain"/>
    <property type="evidence" value="ECO:0000303"/>
    <property type="project" value="UniProtKB"/>
</dbReference>
<dbReference type="GO" id="GO:0009061">
    <property type="term" value="P:anaerobic respiration"/>
    <property type="evidence" value="ECO:0000303"/>
    <property type="project" value="UniProtKB"/>
</dbReference>
<dbReference type="CDD" id="cd08168">
    <property type="entry name" value="Cytochrom_C3"/>
    <property type="match status" value="1"/>
</dbReference>
<dbReference type="FunFam" id="1.10.1130.10:FF:000003">
    <property type="entry name" value="Fumarate reductase flavoprotein subunit"/>
    <property type="match status" value="1"/>
</dbReference>
<dbReference type="FunFam" id="3.50.50.60:FF:000154">
    <property type="entry name" value="Fumarate reductase flavoprotein subunit"/>
    <property type="match status" value="1"/>
</dbReference>
<dbReference type="FunFam" id="3.90.700.10:FF:000007">
    <property type="entry name" value="NADH-dependent fumarate reductase"/>
    <property type="match status" value="1"/>
</dbReference>
<dbReference type="Gene3D" id="3.50.50.60">
    <property type="entry name" value="FAD/NAD(P)-binding domain"/>
    <property type="match status" value="1"/>
</dbReference>
<dbReference type="Gene3D" id="1.10.1130.10">
    <property type="entry name" value="Flavocytochrome C3, Chain A"/>
    <property type="match status" value="1"/>
</dbReference>
<dbReference type="Gene3D" id="3.90.700.10">
    <property type="entry name" value="Succinate dehydrogenase/fumarate reductase flavoprotein, catalytic domain"/>
    <property type="match status" value="1"/>
</dbReference>
<dbReference type="InterPro" id="IPR003953">
    <property type="entry name" value="FAD-dep_OxRdtase_2_FAD-bd"/>
</dbReference>
<dbReference type="InterPro" id="IPR050315">
    <property type="entry name" value="FAD-oxidoreductase_2"/>
</dbReference>
<dbReference type="InterPro" id="IPR036188">
    <property type="entry name" value="FAD/NAD-bd_sf"/>
</dbReference>
<dbReference type="InterPro" id="IPR010960">
    <property type="entry name" value="Flavocytochrome_c"/>
</dbReference>
<dbReference type="InterPro" id="IPR036280">
    <property type="entry name" value="Multihaem_cyt_sf"/>
</dbReference>
<dbReference type="InterPro" id="IPR027477">
    <property type="entry name" value="Succ_DH/fumarate_Rdtase_cat_sf"/>
</dbReference>
<dbReference type="InterPro" id="IPR012286">
    <property type="entry name" value="Tetrahaem_cytochrome"/>
</dbReference>
<dbReference type="InterPro" id="IPR013087">
    <property type="entry name" value="Znf_C2H2_type"/>
</dbReference>
<dbReference type="NCBIfam" id="TIGR01813">
    <property type="entry name" value="flavo_cyto_c"/>
    <property type="match status" value="1"/>
</dbReference>
<dbReference type="PANTHER" id="PTHR43400:SF7">
    <property type="entry name" value="FAD-DEPENDENT OXIDOREDUCTASE 2 FAD BINDING DOMAIN-CONTAINING PROTEIN"/>
    <property type="match status" value="1"/>
</dbReference>
<dbReference type="PANTHER" id="PTHR43400">
    <property type="entry name" value="FUMARATE REDUCTASE"/>
    <property type="match status" value="1"/>
</dbReference>
<dbReference type="Pfam" id="PF14537">
    <property type="entry name" value="Cytochrom_c3_2"/>
    <property type="match status" value="1"/>
</dbReference>
<dbReference type="Pfam" id="PF00890">
    <property type="entry name" value="FAD_binding_2"/>
    <property type="match status" value="1"/>
</dbReference>
<dbReference type="PRINTS" id="PR00368">
    <property type="entry name" value="FADPNR"/>
</dbReference>
<dbReference type="SUPFAM" id="SSF51905">
    <property type="entry name" value="FAD/NAD(P)-binding domain"/>
    <property type="match status" value="1"/>
</dbReference>
<dbReference type="SUPFAM" id="SSF48695">
    <property type="entry name" value="Multiheme cytochromes"/>
    <property type="match status" value="1"/>
</dbReference>
<dbReference type="SUPFAM" id="SSF56425">
    <property type="entry name" value="Succinate dehydrogenase/fumarate reductase flavoprotein, catalytic domain"/>
    <property type="match status" value="1"/>
</dbReference>
<dbReference type="PROSITE" id="PS51008">
    <property type="entry name" value="MULTIHEME_CYTC"/>
    <property type="match status" value="1"/>
</dbReference>
<evidence type="ECO:0000250" key="1">
    <source>
        <dbReference type="UniProtKB" id="P83223"/>
    </source>
</evidence>
<evidence type="ECO:0000250" key="2">
    <source>
        <dbReference type="UniProtKB" id="Q07WU7"/>
    </source>
</evidence>
<evidence type="ECO:0000269" key="3">
    <source>
    </source>
</evidence>
<evidence type="ECO:0000269" key="4">
    <source>
    </source>
</evidence>
<evidence type="ECO:0000269" key="5">
    <source>
    </source>
</evidence>
<evidence type="ECO:0000269" key="6">
    <source>
    </source>
</evidence>
<evidence type="ECO:0000303" key="7">
    <source>
    </source>
</evidence>
<evidence type="ECO:0000305" key="8"/>
<evidence type="ECO:0000305" key="9">
    <source>
    </source>
</evidence>
<evidence type="ECO:0007744" key="10">
    <source>
        <dbReference type="PDB" id="1E39"/>
    </source>
</evidence>
<evidence type="ECO:0007829" key="11">
    <source>
        <dbReference type="PDB" id="1JRX"/>
    </source>
</evidence>
<evidence type="ECO:0007829" key="12">
    <source>
        <dbReference type="PDB" id="1P2H"/>
    </source>
</evidence>
<evidence type="ECO:0007829" key="13">
    <source>
        <dbReference type="PDB" id="1Y0P"/>
    </source>
</evidence>
<protein>
    <recommendedName>
        <fullName evidence="8">Fumarate reductase (cytochrome)</fullName>
        <ecNumber evidence="9">1.3.2.4</ecNumber>
    </recommendedName>
    <alternativeName>
        <fullName>Flavocytochrome c</fullName>
    </alternativeName>
    <alternativeName>
        <fullName evidence="7">Flavocytochrome c3</fullName>
        <shortName evidence="7">Fcc3</shortName>
    </alternativeName>
</protein>
<proteinExistence type="evidence at protein level"/>
<sequence length="571" mass="60621">ADNLAEFHVQNQECDSCHTPDGELSNDSLTYENTQCVSCHGTLEEVAETTKHEHYNAHASHFPGEVACTSCHSAHEKSMVYCDSCHSFDFNMPYAKKWQRDEPTIAELAKDKSERQAALASAPHDTVDVVVVGSGGAGFSAAISATDSGAKVILIEKEPVIGGNAKLAAGGMNAAWTDQQKAKKITDSPELMFEDTMKGGQNINDPALVKVLSSHSKDSVDWMTAMGADLTDVGMMGGASVNRAHRPTGGAGVGAHVVQVLYDNAVKRNIDLRMNTRGIEVLKDDKGTVKGILVKGMYKGYYWVKADAVILATGGFAKNNERVAKLDPSLKGFISTNQPGAVGDGLDVAENAGGALKDMQYIQAHPTLSVKGGVMVTEAVRGNGAILVNREGKRFVNEITTRDKASAAILAQTGKSAYLIFDDSVRKSLSKIDKYIGLGVAPTADSLVKLGKMEGIDGKALTETVARYNSLVSSGKDTDFERPNLPRALNEGNYYAIEVTPGVHHTMGGVMIDTKAEVMNAKKQVIPGLYGAGEVTGGVHGANRLGGNAISDIITFGRLAGEEAAKYSKKN</sequence>
<gene>
    <name type="primary">fccA</name>
    <name type="synonym">fcc3</name>
</gene>
<name>FCCA_SHEFR</name>
<reference key="1">
    <citation type="journal article" date="1999" name="J. Struct. Biol.">
        <title>Crystallization and preliminary X-ray analysis of flavocytochrome c(3), the fumarate reductase from Shewanella frigidimarina.</title>
        <authorList>
            <person name="Pealing S.L."/>
            <person name="Lysek D.A."/>
            <person name="Taylor P."/>
            <person name="Alexeev D."/>
            <person name="Reid G.A."/>
            <person name="Chapman S.K."/>
            <person name="Walkinshaw M.D."/>
        </authorList>
    </citation>
    <scope>NUCLEOTIDE SEQUENCE [GENOMIC DNA] OF 11-571</scope>
    <scope>CRYSTALLIZATION</scope>
    <source>
        <strain>ACAM591</strain>
    </source>
</reference>
<reference key="2">
    <citation type="journal article" date="1999" name="Nat. Struct. Biol.">
        <title>Structural and mechanistic mapping of a unique fumarate reductase.</title>
        <authorList>
            <person name="Taylor P."/>
            <person name="Pealing S.L."/>
            <person name="Reid G.A."/>
            <person name="Chapman S.K."/>
            <person name="Walkinshaw M.D."/>
        </authorList>
    </citation>
    <scope>X-RAY CRYSTALLOGRAPHY (1.8 ANGSTROMS)</scope>
</reference>
<reference evidence="10" key="3">
    <citation type="journal article" date="2000" name="Biochemistry">
        <title>Identification of the active site acid/base catalyst in a bacterial fumarate reductase: a kinetic and crystallographic study.</title>
        <authorList>
            <person name="Doherty M.K."/>
            <person name="Pealing S.L."/>
            <person name="Miles C.S."/>
            <person name="Moysey R."/>
            <person name="Taylor P."/>
            <person name="Walkinshaw M.D."/>
            <person name="Reid G.A."/>
            <person name="Chapman S.K."/>
        </authorList>
    </citation>
    <scope>X-RAY CRYSTALLOGRAPHY (1.8 ANGSTROMS) OF MUTANTS ALA-365 AND ALA-504 IN COMPLEX WITH FAD; FUMARATE AND HEMES C</scope>
    <scope>FUNCTION</scope>
    <scope>BIOPHYSICOCHEMICAL PROPERTIES</scope>
    <scope>COFACTOR</scope>
    <scope>SUBUNIT</scope>
    <scope>MUTAGENESIS OF HIS-365; ARG-402 AND HIS-504</scope>
    <scope>ACTIVE SITE</scope>
</reference>
<reference key="4">
    <citation type="journal article" date="2001" name="Biochemistry">
        <title>Kinetic and crystallographic analysis of the key active site acid/base arginine in a soluble fumarate reductase.</title>
        <authorList>
            <person name="Mowat C.G."/>
            <person name="Moysey R."/>
            <person name="Miles C.S."/>
            <person name="Leys D."/>
            <person name="Doherty M.K."/>
            <person name="Taylor P."/>
            <person name="Walkinshaw M.D."/>
            <person name="Reid G.A."/>
            <person name="Chapman S.K."/>
        </authorList>
    </citation>
    <scope>X-RAY CRYSTALLOGRAPHY (2.0 ANGSTROMS) OF MUTANTS ALA-402; LYS-402 AND TYR-402</scope>
    <scope>MUTAGENESIS OF ARG-402</scope>
    <scope>ENZYME KINETICS</scope>
</reference>
<reference key="5">
    <citation type="journal article" date="2002" name="Biochemistry">
        <title>Role of His505 in the soluble fumarate reductase from Shewanella frigidimarina.</title>
        <authorList>
            <person name="Pankhurst K.L."/>
            <person name="Mowat C.G."/>
            <person name="Miles C.S."/>
            <person name="Leys D."/>
            <person name="Walkinshaw M.D."/>
            <person name="Reid G.A."/>
            <person name="Chapman S.K."/>
        </authorList>
    </citation>
    <scope>X-RAY CRYSTALLOGRAPHY (1.8 ANGSTROMS) OF MUTANTS ALA-505 AND TYR-505</scope>
    <scope>CHARACTERIZATION</scope>
</reference>
<reference key="6">
    <citation type="journal article" date="2002" name="Biochemistry">
        <title>Engineering water to act as an active site acid catalyst in a soluble fumarate reductase.</title>
        <authorList>
            <person name="Mowat C.G."/>
            <person name="Pankhurst K.L."/>
            <person name="Miles C.S."/>
            <person name="Leys D."/>
            <person name="Walkinshaw M.D."/>
            <person name="Reid G.A."/>
            <person name="Chapman S.K."/>
        </authorList>
    </citation>
    <scope>X-RAY CRYSTALLOGRAPHY (1.8 ANGSTROMS) OF MUTANTS PHE-363 AND PHE-363/ALA-402</scope>
    <scope>CHARACTERIZATION</scope>
    <scope>IDENTIFICATION BY MASS SPECTROMETRY</scope>
</reference>
<reference key="7">
    <citation type="journal article" date="2003" name="Biochemistry">
        <title>Histidine 61: an important heme ligand in the soluble fumarate reductase from Shewanella frigidimarina.</title>
        <authorList>
            <person name="Rothery E.L."/>
            <person name="Mowat C.G."/>
            <person name="Miles C.S."/>
            <person name="Walkinshaw M.D."/>
            <person name="Reid G.A."/>
            <person name="Chapman S.K."/>
        </authorList>
    </citation>
    <scope>X-RAY CRYSTALLOGRAPHY (2.1 ANGSTROMS) OF MUTANTS ALA-61 AND MET-61 IN COMPLEXES WITH HEME; SUBSTRATE AND FAD</scope>
    <scope>MASS SPECTROMETRY</scope>
    <scope>MUTAGENESIS OF HIS-61</scope>
</reference>
<reference key="8">
    <citation type="journal article" date="2004" name="Biochemistry">
        <title>Probing domain mobility in a flavocytochrome.</title>
        <authorList>
            <person name="Rothery E.L."/>
            <person name="Mowat C.G."/>
            <person name="Miles C.S."/>
            <person name="Mott S."/>
            <person name="Walkinshaw M.D."/>
            <person name="Reid G.A."/>
            <person name="Chapman S.K."/>
        </authorList>
    </citation>
    <scope>X-RAY CRYSTALLOGRAPHY (1.6 ANGSTROMS) OF MUTANT CYS-251/CYS430</scope>
</reference>
<reference key="9">
    <citation type="journal article" date="2006" name="J. Biol. Chem.">
        <title>A proton delivery pathway in the soluble fumarate reductase from Shewanella frigidimarina.</title>
        <authorList>
            <person name="Pankhurst K.L."/>
            <person name="Mowat C.G."/>
            <person name="Rothery E.L."/>
            <person name="Hudson J.M."/>
            <person name="Jones A.K."/>
            <person name="Miles C.S."/>
            <person name="Walkinshaw M.D."/>
            <person name="Armstrong F.A."/>
            <person name="Reid G.A."/>
            <person name="Chapman S.K."/>
        </authorList>
    </citation>
    <scope>X-RAY CRYSTALLOGRAPHY (1.7 ANGSTROMS) OF MUTANTS ASP-378 AND MET-381</scope>
    <scope>MUTAGENESIS OF GLU-378 AND ARG-381</scope>
    <scope>IDENTIFICATION BY MASS SPECTROMETRY</scope>
</reference>
<comment type="function">
    <text evidence="1 2 3">Flavocytochrome that catalyzes the reduction of fumarate to succinate (PubMed:10978153). Is essential for fumarate respiration during anaerobic growth, acting as the terminal reductase (By similarity). Receives electrons from the membrane-bound tetraheme c-type cytochrome CymA (By similarity). In vitro, can use the artificial electron donor methyl viologen (PubMed:10978153).</text>
</comment>
<comment type="catalytic activity">
    <reaction evidence="9">
        <text>2 Fe(III)-[cytochrome c] + succinate = fumarate + 2 Fe(II)-[cytochrome c] + 2 H(+)</text>
        <dbReference type="Rhea" id="RHEA:77903"/>
        <dbReference type="Rhea" id="RHEA-COMP:10350"/>
        <dbReference type="Rhea" id="RHEA-COMP:14399"/>
        <dbReference type="ChEBI" id="CHEBI:15378"/>
        <dbReference type="ChEBI" id="CHEBI:29033"/>
        <dbReference type="ChEBI" id="CHEBI:29034"/>
        <dbReference type="ChEBI" id="CHEBI:29806"/>
        <dbReference type="ChEBI" id="CHEBI:30031"/>
        <dbReference type="EC" id="1.3.2.4"/>
    </reaction>
</comment>
<comment type="cofactor">
    <cofactor evidence="3">
        <name>FAD</name>
        <dbReference type="ChEBI" id="CHEBI:57692"/>
    </cofactor>
    <text evidence="3">Binds 1 FAD per subunit.</text>
</comment>
<comment type="cofactor">
    <cofactor evidence="3">
        <name>heme c</name>
        <dbReference type="ChEBI" id="CHEBI:61717"/>
    </cofactor>
    <text evidence="3">Binds 4 heme c groups covalently per monomer.</text>
</comment>
<comment type="biophysicochemical properties">
    <kinetics>
        <KM evidence="3">43 uM for fumarate (at pH 6.0 with methyl viologen as electron donor)</KM>
        <KM evidence="3">25 uM for fumarate (at pH 7.2 with methyl viologen as electron donor)</KM>
        <KM evidence="3">28 uM for fumarate (at pH 7.5 with methyl viologen as electron donor)</KM>
        <KM evidence="3">7 uM for fumarate (at pH 9.0 with methyl viologen as electron donor)</KM>
        <text evidence="3">kcat is 658 sec(-1) at pH 6.0. kcat is 509 sec(-1) at pH 7.2. kcat is 370 sec(-1) at pH 7.5. kcat is 210 sec(-1) at pH 9.0.</text>
    </kinetics>
</comment>
<comment type="subunit">
    <text evidence="3">Monomer.</text>
</comment>
<comment type="subcellular location">
    <subcellularLocation>
        <location>Periplasm</location>
    </subcellularLocation>
</comment>
<comment type="induction">
    <text>By anaerobiosis and fumarate.</text>
</comment>
<comment type="mass spectrometry" mass="63033.0" error="10.0" method="Electrospray" evidence="5"/>
<comment type="similarity">
    <text evidence="8">In the C-terminal section; belongs to the FAD-dependent oxidoreductase 2 family. FRD/SDH subfamily.</text>
</comment>
<comment type="caution">
    <text evidence="8">The N-terminal sequence has been extracted from PDB entry 1LJ1.</text>
</comment>